<sequence>MLTAVVGLQFGDEGKGKFVDYLSGNINNIARFNGGANAGHCVQHGNLRGSFSQLPASLNKKNLYICQGALISLPILVKEIDFIKKEDIDSHIFIDPRCHIVLPLHAELNRASEKYKGKQKIGSVGVGVGACVEDKANRHGIRLIDTFDKEKLRSKLEFLWSIREKQINHVFNAQASLDFEEMLETTHQYGKRIEPYFTFTNEIIGDLLNSGEDVLLETSQATFLDNSFGTYPYTVAYQTLVQTCFAMIGIPAQKMHIVGVMKSYMIRVGNGPFPTELSTEQADYIRERGNEYGTVSKRPRRCGWLDLSLIKHAVKLNGVIELAITNVDVLAGLDEIKVAVAYEIDDKLVCCDNALLQLDRAKPIYKTFKSWSTLNSSYTDLTELPIELIDFLSFIQDYTGVPIKYISYGPDRNQTLVVK</sequence>
<gene>
    <name evidence="1" type="primary">purA1</name>
    <name type="ordered locus">plu0794</name>
</gene>
<proteinExistence type="inferred from homology"/>
<name>PURA1_PHOLL</name>
<comment type="function">
    <text evidence="1">Plays an important role in the de novo pathway of purine nucleotide biosynthesis. Catalyzes the first committed step in the biosynthesis of AMP from IMP.</text>
</comment>
<comment type="catalytic activity">
    <reaction evidence="1">
        <text>IMP + L-aspartate + GTP = N(6)-(1,2-dicarboxyethyl)-AMP + GDP + phosphate + 2 H(+)</text>
        <dbReference type="Rhea" id="RHEA:15753"/>
        <dbReference type="ChEBI" id="CHEBI:15378"/>
        <dbReference type="ChEBI" id="CHEBI:29991"/>
        <dbReference type="ChEBI" id="CHEBI:37565"/>
        <dbReference type="ChEBI" id="CHEBI:43474"/>
        <dbReference type="ChEBI" id="CHEBI:57567"/>
        <dbReference type="ChEBI" id="CHEBI:58053"/>
        <dbReference type="ChEBI" id="CHEBI:58189"/>
        <dbReference type="EC" id="6.3.4.4"/>
    </reaction>
</comment>
<comment type="cofactor">
    <cofactor evidence="1">
        <name>Mg(2+)</name>
        <dbReference type="ChEBI" id="CHEBI:18420"/>
    </cofactor>
    <text evidence="1">Binds 1 Mg(2+) ion per subunit.</text>
</comment>
<comment type="pathway">
    <text evidence="1">Purine metabolism; AMP biosynthesis via de novo pathway; AMP from IMP: step 1/2.</text>
</comment>
<comment type="subunit">
    <text evidence="1">Homodimer.</text>
</comment>
<comment type="subcellular location">
    <subcellularLocation>
        <location evidence="1">Cytoplasm</location>
    </subcellularLocation>
</comment>
<comment type="similarity">
    <text evidence="1">Belongs to the adenylosuccinate synthetase family.</text>
</comment>
<accession>Q7N8D4</accession>
<organism>
    <name type="scientific">Photorhabdus laumondii subsp. laumondii (strain DSM 15139 / CIP 105565 / TT01)</name>
    <name type="common">Photorhabdus luminescens subsp. laumondii</name>
    <dbReference type="NCBI Taxonomy" id="243265"/>
    <lineage>
        <taxon>Bacteria</taxon>
        <taxon>Pseudomonadati</taxon>
        <taxon>Pseudomonadota</taxon>
        <taxon>Gammaproteobacteria</taxon>
        <taxon>Enterobacterales</taxon>
        <taxon>Morganellaceae</taxon>
        <taxon>Photorhabdus</taxon>
    </lineage>
</organism>
<keyword id="KW-0963">Cytoplasm</keyword>
<keyword id="KW-0342">GTP-binding</keyword>
<keyword id="KW-0436">Ligase</keyword>
<keyword id="KW-0460">Magnesium</keyword>
<keyword id="KW-0479">Metal-binding</keyword>
<keyword id="KW-0547">Nucleotide-binding</keyword>
<keyword id="KW-0658">Purine biosynthesis</keyword>
<keyword id="KW-1185">Reference proteome</keyword>
<reference key="1">
    <citation type="journal article" date="2003" name="Nat. Biotechnol.">
        <title>The genome sequence of the entomopathogenic bacterium Photorhabdus luminescens.</title>
        <authorList>
            <person name="Duchaud E."/>
            <person name="Rusniok C."/>
            <person name="Frangeul L."/>
            <person name="Buchrieser C."/>
            <person name="Givaudan A."/>
            <person name="Taourit S."/>
            <person name="Bocs S."/>
            <person name="Boursaux-Eude C."/>
            <person name="Chandler M."/>
            <person name="Charles J.-F."/>
            <person name="Dassa E."/>
            <person name="Derose R."/>
            <person name="Derzelle S."/>
            <person name="Freyssinet G."/>
            <person name="Gaudriault S."/>
            <person name="Medigue C."/>
            <person name="Lanois A."/>
            <person name="Powell K."/>
            <person name="Siguier P."/>
            <person name="Vincent R."/>
            <person name="Wingate V."/>
            <person name="Zouine M."/>
            <person name="Glaser P."/>
            <person name="Boemare N."/>
            <person name="Danchin A."/>
            <person name="Kunst F."/>
        </authorList>
    </citation>
    <scope>NUCLEOTIDE SEQUENCE [LARGE SCALE GENOMIC DNA]</scope>
    <source>
        <strain>DSM 15139 / CIP 105565 / TT01</strain>
    </source>
</reference>
<dbReference type="EC" id="6.3.4.4" evidence="1"/>
<dbReference type="EMBL" id="BX571861">
    <property type="protein sequence ID" value="CAE13089.1"/>
    <property type="molecule type" value="Genomic_DNA"/>
</dbReference>
<dbReference type="RefSeq" id="WP_011145168.1">
    <property type="nucleotide sequence ID" value="NC_005126.1"/>
</dbReference>
<dbReference type="SMR" id="Q7N8D4"/>
<dbReference type="STRING" id="243265.plu0794"/>
<dbReference type="GeneID" id="48847084"/>
<dbReference type="KEGG" id="plu:plu0794"/>
<dbReference type="eggNOG" id="COG0104">
    <property type="taxonomic scope" value="Bacteria"/>
</dbReference>
<dbReference type="HOGENOM" id="CLU_029848_0_2_6"/>
<dbReference type="OrthoDB" id="6446313at2"/>
<dbReference type="UniPathway" id="UPA00075">
    <property type="reaction ID" value="UER00335"/>
</dbReference>
<dbReference type="Proteomes" id="UP000002514">
    <property type="component" value="Chromosome"/>
</dbReference>
<dbReference type="GO" id="GO:0005737">
    <property type="term" value="C:cytoplasm"/>
    <property type="evidence" value="ECO:0007669"/>
    <property type="project" value="UniProtKB-SubCell"/>
</dbReference>
<dbReference type="GO" id="GO:0004019">
    <property type="term" value="F:adenylosuccinate synthase activity"/>
    <property type="evidence" value="ECO:0007669"/>
    <property type="project" value="UniProtKB-UniRule"/>
</dbReference>
<dbReference type="GO" id="GO:0005525">
    <property type="term" value="F:GTP binding"/>
    <property type="evidence" value="ECO:0007669"/>
    <property type="project" value="UniProtKB-UniRule"/>
</dbReference>
<dbReference type="GO" id="GO:0000287">
    <property type="term" value="F:magnesium ion binding"/>
    <property type="evidence" value="ECO:0007669"/>
    <property type="project" value="UniProtKB-UniRule"/>
</dbReference>
<dbReference type="GO" id="GO:0044208">
    <property type="term" value="P:'de novo' AMP biosynthetic process"/>
    <property type="evidence" value="ECO:0007669"/>
    <property type="project" value="UniProtKB-UniRule"/>
</dbReference>
<dbReference type="GO" id="GO:0046040">
    <property type="term" value="P:IMP metabolic process"/>
    <property type="evidence" value="ECO:0007669"/>
    <property type="project" value="TreeGrafter"/>
</dbReference>
<dbReference type="CDD" id="cd03108">
    <property type="entry name" value="AdSS"/>
    <property type="match status" value="1"/>
</dbReference>
<dbReference type="FunFam" id="1.10.300.10:FF:000001">
    <property type="entry name" value="Adenylosuccinate synthetase"/>
    <property type="match status" value="1"/>
</dbReference>
<dbReference type="FunFam" id="3.90.170.10:FF:000001">
    <property type="entry name" value="Adenylosuccinate synthetase"/>
    <property type="match status" value="1"/>
</dbReference>
<dbReference type="Gene3D" id="3.40.440.10">
    <property type="entry name" value="Adenylosuccinate Synthetase, subunit A, domain 1"/>
    <property type="match status" value="1"/>
</dbReference>
<dbReference type="Gene3D" id="1.10.300.10">
    <property type="entry name" value="Adenylosuccinate Synthetase, subunit A, domain 2"/>
    <property type="match status" value="1"/>
</dbReference>
<dbReference type="Gene3D" id="3.90.170.10">
    <property type="entry name" value="Adenylosuccinate Synthetase, subunit A, domain 3"/>
    <property type="match status" value="1"/>
</dbReference>
<dbReference type="HAMAP" id="MF_00011">
    <property type="entry name" value="Adenylosucc_synth"/>
    <property type="match status" value="1"/>
</dbReference>
<dbReference type="InterPro" id="IPR018220">
    <property type="entry name" value="Adenylosuccin_syn_GTP-bd"/>
</dbReference>
<dbReference type="InterPro" id="IPR042109">
    <property type="entry name" value="Adenylosuccinate_synth_dom1"/>
</dbReference>
<dbReference type="InterPro" id="IPR042110">
    <property type="entry name" value="Adenylosuccinate_synth_dom2"/>
</dbReference>
<dbReference type="InterPro" id="IPR042111">
    <property type="entry name" value="Adenylosuccinate_synth_dom3"/>
</dbReference>
<dbReference type="InterPro" id="IPR001114">
    <property type="entry name" value="Adenylosuccinate_synthetase"/>
</dbReference>
<dbReference type="InterPro" id="IPR027417">
    <property type="entry name" value="P-loop_NTPase"/>
</dbReference>
<dbReference type="NCBIfam" id="NF002223">
    <property type="entry name" value="PRK01117.1"/>
    <property type="match status" value="1"/>
</dbReference>
<dbReference type="PANTHER" id="PTHR11846">
    <property type="entry name" value="ADENYLOSUCCINATE SYNTHETASE"/>
    <property type="match status" value="1"/>
</dbReference>
<dbReference type="PANTHER" id="PTHR11846:SF0">
    <property type="entry name" value="ADENYLOSUCCINATE SYNTHETASE"/>
    <property type="match status" value="1"/>
</dbReference>
<dbReference type="Pfam" id="PF00709">
    <property type="entry name" value="Adenylsucc_synt"/>
    <property type="match status" value="1"/>
</dbReference>
<dbReference type="SMART" id="SM00788">
    <property type="entry name" value="Adenylsucc_synt"/>
    <property type="match status" value="1"/>
</dbReference>
<dbReference type="SUPFAM" id="SSF52540">
    <property type="entry name" value="P-loop containing nucleoside triphosphate hydrolases"/>
    <property type="match status" value="1"/>
</dbReference>
<dbReference type="PROSITE" id="PS01266">
    <property type="entry name" value="ADENYLOSUCCIN_SYN_1"/>
    <property type="match status" value="1"/>
</dbReference>
<protein>
    <recommendedName>
        <fullName evidence="1">Adenylosuccinate synthetase 1</fullName>
        <shortName evidence="1">AMPSase 1</shortName>
        <shortName evidence="1">AdSS 1</shortName>
        <ecNumber evidence="1">6.3.4.4</ecNumber>
    </recommendedName>
    <alternativeName>
        <fullName evidence="1">IMP--aspartate ligase 1</fullName>
    </alternativeName>
</protein>
<feature type="chain" id="PRO_0000095207" description="Adenylosuccinate synthetase 1">
    <location>
        <begin position="1"/>
        <end position="419"/>
    </location>
</feature>
<feature type="active site" description="Proton acceptor" evidence="1">
    <location>
        <position position="12"/>
    </location>
</feature>
<feature type="active site" description="Proton donor" evidence="1">
    <location>
        <position position="40"/>
    </location>
</feature>
<feature type="binding site" evidence="1">
    <location>
        <begin position="11"/>
        <end position="17"/>
    </location>
    <ligand>
        <name>GTP</name>
        <dbReference type="ChEBI" id="CHEBI:37565"/>
    </ligand>
</feature>
<feature type="binding site" description="in other chain" evidence="1">
    <location>
        <begin position="12"/>
        <end position="15"/>
    </location>
    <ligand>
        <name>IMP</name>
        <dbReference type="ChEBI" id="CHEBI:58053"/>
        <note>ligand shared between dimeric partners</note>
    </ligand>
</feature>
<feature type="binding site" evidence="1">
    <location>
        <position position="12"/>
    </location>
    <ligand>
        <name>Mg(2+)</name>
        <dbReference type="ChEBI" id="CHEBI:18420"/>
    </ligand>
</feature>
<feature type="binding site" description="in other chain" evidence="1">
    <location>
        <begin position="37"/>
        <end position="40"/>
    </location>
    <ligand>
        <name>IMP</name>
        <dbReference type="ChEBI" id="CHEBI:58053"/>
        <note>ligand shared between dimeric partners</note>
    </ligand>
</feature>
<feature type="binding site" evidence="1">
    <location>
        <position position="39"/>
    </location>
    <ligand>
        <name>Mg(2+)</name>
        <dbReference type="ChEBI" id="CHEBI:18420"/>
    </ligand>
</feature>
<feature type="binding site" evidence="1">
    <location>
        <position position="138"/>
    </location>
    <ligand>
        <name>IMP</name>
        <dbReference type="ChEBI" id="CHEBI:58053"/>
        <note>ligand shared between dimeric partners</note>
    </ligand>
</feature>
<feature type="binding site" description="in other chain" evidence="1">
    <location>
        <position position="220"/>
    </location>
    <ligand>
        <name>IMP</name>
        <dbReference type="ChEBI" id="CHEBI:58053"/>
        <note>ligand shared between dimeric partners</note>
    </ligand>
</feature>
<feature type="binding site" evidence="1">
    <location>
        <begin position="294"/>
        <end position="300"/>
    </location>
    <ligand>
        <name>substrate</name>
    </ligand>
</feature>
<feature type="binding site" description="in other chain" evidence="1">
    <location>
        <position position="298"/>
    </location>
    <ligand>
        <name>IMP</name>
        <dbReference type="ChEBI" id="CHEBI:58053"/>
        <note>ligand shared between dimeric partners</note>
    </ligand>
</feature>
<feature type="binding site" evidence="1">
    <location>
        <position position="300"/>
    </location>
    <ligand>
        <name>GTP</name>
        <dbReference type="ChEBI" id="CHEBI:37565"/>
    </ligand>
</feature>
<feature type="binding site" evidence="1">
    <location>
        <begin position="326"/>
        <end position="328"/>
    </location>
    <ligand>
        <name>GTP</name>
        <dbReference type="ChEBI" id="CHEBI:37565"/>
    </ligand>
</feature>
<feature type="binding site" evidence="1">
    <location>
        <begin position="407"/>
        <end position="409"/>
    </location>
    <ligand>
        <name>GTP</name>
        <dbReference type="ChEBI" id="CHEBI:37565"/>
    </ligand>
</feature>
<evidence type="ECO:0000255" key="1">
    <source>
        <dbReference type="HAMAP-Rule" id="MF_00011"/>
    </source>
</evidence>